<organism>
    <name type="scientific">Vibrio cholerae serotype O1 (strain M66-2)</name>
    <dbReference type="NCBI Taxonomy" id="579112"/>
    <lineage>
        <taxon>Bacteria</taxon>
        <taxon>Pseudomonadati</taxon>
        <taxon>Pseudomonadota</taxon>
        <taxon>Gammaproteobacteria</taxon>
        <taxon>Vibrionales</taxon>
        <taxon>Vibrionaceae</taxon>
        <taxon>Vibrio</taxon>
    </lineage>
</organism>
<accession>C3LVN8</accession>
<proteinExistence type="inferred from homology"/>
<dbReference type="EC" id="2.2.1.2" evidence="2"/>
<dbReference type="EMBL" id="CP001234">
    <property type="protein sequence ID" value="ACP07543.1"/>
    <property type="molecule type" value="Genomic_DNA"/>
</dbReference>
<dbReference type="RefSeq" id="WP_000066347.1">
    <property type="nucleotide sequence ID" value="NC_012580.1"/>
</dbReference>
<dbReference type="SMR" id="C3LVN8"/>
<dbReference type="GeneID" id="94015280"/>
<dbReference type="KEGG" id="vcm:VCM66_A0581"/>
<dbReference type="HOGENOM" id="CLU_047470_0_1_6"/>
<dbReference type="UniPathway" id="UPA00115">
    <property type="reaction ID" value="UER00414"/>
</dbReference>
<dbReference type="Proteomes" id="UP000001217">
    <property type="component" value="Chromosome II"/>
</dbReference>
<dbReference type="GO" id="GO:0005829">
    <property type="term" value="C:cytosol"/>
    <property type="evidence" value="ECO:0007669"/>
    <property type="project" value="TreeGrafter"/>
</dbReference>
<dbReference type="GO" id="GO:0004801">
    <property type="term" value="F:transaldolase activity"/>
    <property type="evidence" value="ECO:0000250"/>
    <property type="project" value="UniProtKB"/>
</dbReference>
<dbReference type="GO" id="GO:0005975">
    <property type="term" value="P:carbohydrate metabolic process"/>
    <property type="evidence" value="ECO:0007669"/>
    <property type="project" value="InterPro"/>
</dbReference>
<dbReference type="GO" id="GO:0006098">
    <property type="term" value="P:pentose-phosphate shunt"/>
    <property type="evidence" value="ECO:0007669"/>
    <property type="project" value="UniProtKB-UniRule"/>
</dbReference>
<dbReference type="CDD" id="cd00957">
    <property type="entry name" value="Transaldolase_TalAB"/>
    <property type="match status" value="1"/>
</dbReference>
<dbReference type="FunFam" id="3.20.20.70:FF:000002">
    <property type="entry name" value="Transaldolase"/>
    <property type="match status" value="1"/>
</dbReference>
<dbReference type="Gene3D" id="3.20.20.70">
    <property type="entry name" value="Aldolase class I"/>
    <property type="match status" value="1"/>
</dbReference>
<dbReference type="HAMAP" id="MF_00492">
    <property type="entry name" value="Transaldolase_1"/>
    <property type="match status" value="1"/>
</dbReference>
<dbReference type="InterPro" id="IPR013785">
    <property type="entry name" value="Aldolase_TIM"/>
</dbReference>
<dbReference type="InterPro" id="IPR001585">
    <property type="entry name" value="TAL/FSA"/>
</dbReference>
<dbReference type="InterPro" id="IPR004730">
    <property type="entry name" value="Transaldolase_1"/>
</dbReference>
<dbReference type="InterPro" id="IPR018225">
    <property type="entry name" value="Transaldolase_AS"/>
</dbReference>
<dbReference type="NCBIfam" id="NF009001">
    <property type="entry name" value="PRK12346.1"/>
    <property type="match status" value="1"/>
</dbReference>
<dbReference type="NCBIfam" id="TIGR00874">
    <property type="entry name" value="talAB"/>
    <property type="match status" value="1"/>
</dbReference>
<dbReference type="PANTHER" id="PTHR10683">
    <property type="entry name" value="TRANSALDOLASE"/>
    <property type="match status" value="1"/>
</dbReference>
<dbReference type="PANTHER" id="PTHR10683:SF18">
    <property type="entry name" value="TRANSALDOLASE"/>
    <property type="match status" value="1"/>
</dbReference>
<dbReference type="Pfam" id="PF00923">
    <property type="entry name" value="TAL_FSA"/>
    <property type="match status" value="1"/>
</dbReference>
<dbReference type="SUPFAM" id="SSF51569">
    <property type="entry name" value="Aldolase"/>
    <property type="match status" value="1"/>
</dbReference>
<dbReference type="PROSITE" id="PS01054">
    <property type="entry name" value="TRANSALDOLASE_1"/>
    <property type="match status" value="1"/>
</dbReference>
<dbReference type="PROSITE" id="PS00958">
    <property type="entry name" value="TRANSALDOLASE_2"/>
    <property type="match status" value="1"/>
</dbReference>
<keyword id="KW-0963">Cytoplasm</keyword>
<keyword id="KW-0570">Pentose shunt</keyword>
<keyword id="KW-0704">Schiff base</keyword>
<keyword id="KW-0808">Transferase</keyword>
<sequence>MSNKLAQLRKLTTVVADTGEIDAIKKYQPEDATTNPSLILKAAQIAEYAPLIDQAIAYAKTQSNDKAQQVQDTCDMLAVNIGKEILKTIPGRISTEVDARLSYDTERSVAKARQLVKMYNDAGISNDRILIKLASTWEGIRAAEILEKEGINCNLTLLFSFAQARACAEAGVFLISPFVGRIMDWYKAKEGRDFAASEDPGVLSVTKIYNYYKEHGYKTVVMGASFRNIGEILELAGCDRLTIAPSLLAELEAAEGELVAKLVDSKGSKARPAPMTHSEFLWEHNLDAMAVEKLAEGIRNFAVDQGKLEAMIAAKL</sequence>
<reference key="1">
    <citation type="journal article" date="2008" name="PLoS ONE">
        <title>A recalibrated molecular clock and independent origins for the cholera pandemic clones.</title>
        <authorList>
            <person name="Feng L."/>
            <person name="Reeves P.R."/>
            <person name="Lan R."/>
            <person name="Ren Y."/>
            <person name="Gao C."/>
            <person name="Zhou Z."/>
            <person name="Ren Y."/>
            <person name="Cheng J."/>
            <person name="Wang W."/>
            <person name="Wang J."/>
            <person name="Qian W."/>
            <person name="Li D."/>
            <person name="Wang L."/>
        </authorList>
    </citation>
    <scope>NUCLEOTIDE SEQUENCE [LARGE SCALE GENOMIC DNA]</scope>
    <source>
        <strain>M66-2</strain>
    </source>
</reference>
<name>TAL_VIBCM</name>
<evidence type="ECO:0000250" key="1"/>
<evidence type="ECO:0000255" key="2">
    <source>
        <dbReference type="HAMAP-Rule" id="MF_00492"/>
    </source>
</evidence>
<feature type="chain" id="PRO_1000198456" description="Transaldolase">
    <location>
        <begin position="1"/>
        <end position="316"/>
    </location>
</feature>
<feature type="active site" description="Schiff-base intermediate with substrate" evidence="2">
    <location>
        <position position="132"/>
    </location>
</feature>
<comment type="function">
    <text evidence="2">Transaldolase is important for the balance of metabolites in the pentose-phosphate pathway.</text>
</comment>
<comment type="catalytic activity">
    <reaction evidence="2">
        <text>D-sedoheptulose 7-phosphate + D-glyceraldehyde 3-phosphate = D-erythrose 4-phosphate + beta-D-fructose 6-phosphate</text>
        <dbReference type="Rhea" id="RHEA:17053"/>
        <dbReference type="ChEBI" id="CHEBI:16897"/>
        <dbReference type="ChEBI" id="CHEBI:57483"/>
        <dbReference type="ChEBI" id="CHEBI:57634"/>
        <dbReference type="ChEBI" id="CHEBI:59776"/>
        <dbReference type="EC" id="2.2.1.2"/>
    </reaction>
</comment>
<comment type="pathway">
    <text evidence="2">Carbohydrate degradation; pentose phosphate pathway; D-glyceraldehyde 3-phosphate and beta-D-fructose 6-phosphate from D-ribose 5-phosphate and D-xylulose 5-phosphate (non-oxidative stage): step 2/3.</text>
</comment>
<comment type="subunit">
    <text evidence="1">Homodimer.</text>
</comment>
<comment type="subcellular location">
    <subcellularLocation>
        <location evidence="2">Cytoplasm</location>
    </subcellularLocation>
</comment>
<comment type="similarity">
    <text evidence="2">Belongs to the transaldolase family. Type 1 subfamily.</text>
</comment>
<protein>
    <recommendedName>
        <fullName evidence="2">Transaldolase</fullName>
        <ecNumber evidence="2">2.2.1.2</ecNumber>
    </recommendedName>
</protein>
<gene>
    <name evidence="2" type="primary">tal</name>
    <name type="ordered locus">VCM66_A0581</name>
</gene>